<sequence length="118" mass="13378">MARIAGVNIPVHKHTVIGLTSIYGIGKTRAQQICQTCNVDPTVKIKDLSEEQVESLRTEVAKFTVEGDLRREVSMDIKRLMDLGCFRGRRHRRSLPVRGQRTKTNARTRKGPRKPIKA</sequence>
<organism>
    <name type="scientific">Francisella tularensis subsp. holarctica (strain FTNF002-00 / FTA)</name>
    <dbReference type="NCBI Taxonomy" id="458234"/>
    <lineage>
        <taxon>Bacteria</taxon>
        <taxon>Pseudomonadati</taxon>
        <taxon>Pseudomonadota</taxon>
        <taxon>Gammaproteobacteria</taxon>
        <taxon>Thiotrichales</taxon>
        <taxon>Francisellaceae</taxon>
        <taxon>Francisella</taxon>
    </lineage>
</organism>
<comment type="function">
    <text evidence="1">Located at the top of the head of the 30S subunit, it contacts several helices of the 16S rRNA. In the 70S ribosome it contacts the 23S rRNA (bridge B1a) and protein L5 of the 50S subunit (bridge B1b), connecting the 2 subunits; these bridges are implicated in subunit movement. Contacts the tRNAs in the A and P-sites.</text>
</comment>
<comment type="subunit">
    <text evidence="1">Part of the 30S ribosomal subunit. Forms a loose heterodimer with protein S19. Forms two bridges to the 50S subunit in the 70S ribosome.</text>
</comment>
<comment type="similarity">
    <text evidence="1">Belongs to the universal ribosomal protein uS13 family.</text>
</comment>
<name>RS13_FRATF</name>
<protein>
    <recommendedName>
        <fullName evidence="1">Small ribosomal subunit protein uS13</fullName>
    </recommendedName>
    <alternativeName>
        <fullName evidence="3">30S ribosomal protein S13</fullName>
    </alternativeName>
</protein>
<evidence type="ECO:0000255" key="1">
    <source>
        <dbReference type="HAMAP-Rule" id="MF_01315"/>
    </source>
</evidence>
<evidence type="ECO:0000256" key="2">
    <source>
        <dbReference type="SAM" id="MobiDB-lite"/>
    </source>
</evidence>
<evidence type="ECO:0000305" key="3"/>
<accession>A7N9U6</accession>
<dbReference type="EMBL" id="CP000803">
    <property type="protein sequence ID" value="ABU60749.1"/>
    <property type="molecule type" value="Genomic_DNA"/>
</dbReference>
<dbReference type="RefSeq" id="WP_003014373.1">
    <property type="nucleotide sequence ID" value="NC_009749.1"/>
</dbReference>
<dbReference type="SMR" id="A7N9U6"/>
<dbReference type="GeneID" id="75264239"/>
<dbReference type="KEGG" id="fta:FTA_0272"/>
<dbReference type="HOGENOM" id="CLU_103849_1_2_6"/>
<dbReference type="GO" id="GO:0005829">
    <property type="term" value="C:cytosol"/>
    <property type="evidence" value="ECO:0007669"/>
    <property type="project" value="TreeGrafter"/>
</dbReference>
<dbReference type="GO" id="GO:0015935">
    <property type="term" value="C:small ribosomal subunit"/>
    <property type="evidence" value="ECO:0007669"/>
    <property type="project" value="TreeGrafter"/>
</dbReference>
<dbReference type="GO" id="GO:0019843">
    <property type="term" value="F:rRNA binding"/>
    <property type="evidence" value="ECO:0007669"/>
    <property type="project" value="UniProtKB-UniRule"/>
</dbReference>
<dbReference type="GO" id="GO:0003735">
    <property type="term" value="F:structural constituent of ribosome"/>
    <property type="evidence" value="ECO:0007669"/>
    <property type="project" value="InterPro"/>
</dbReference>
<dbReference type="GO" id="GO:0000049">
    <property type="term" value="F:tRNA binding"/>
    <property type="evidence" value="ECO:0007669"/>
    <property type="project" value="UniProtKB-UniRule"/>
</dbReference>
<dbReference type="GO" id="GO:0006412">
    <property type="term" value="P:translation"/>
    <property type="evidence" value="ECO:0007669"/>
    <property type="project" value="UniProtKB-UniRule"/>
</dbReference>
<dbReference type="FunFam" id="1.10.8.50:FF:000001">
    <property type="entry name" value="30S ribosomal protein S13"/>
    <property type="match status" value="1"/>
</dbReference>
<dbReference type="FunFam" id="4.10.910.10:FF:000001">
    <property type="entry name" value="30S ribosomal protein S13"/>
    <property type="match status" value="1"/>
</dbReference>
<dbReference type="Gene3D" id="1.10.8.50">
    <property type="match status" value="1"/>
</dbReference>
<dbReference type="Gene3D" id="4.10.910.10">
    <property type="entry name" value="30s ribosomal protein s13, domain 2"/>
    <property type="match status" value="1"/>
</dbReference>
<dbReference type="HAMAP" id="MF_01315">
    <property type="entry name" value="Ribosomal_uS13"/>
    <property type="match status" value="1"/>
</dbReference>
<dbReference type="InterPro" id="IPR027437">
    <property type="entry name" value="Rbsml_uS13_C"/>
</dbReference>
<dbReference type="InterPro" id="IPR001892">
    <property type="entry name" value="Ribosomal_uS13"/>
</dbReference>
<dbReference type="InterPro" id="IPR010979">
    <property type="entry name" value="Ribosomal_uS13-like_H2TH"/>
</dbReference>
<dbReference type="InterPro" id="IPR019980">
    <property type="entry name" value="Ribosomal_uS13_bac-type"/>
</dbReference>
<dbReference type="InterPro" id="IPR018269">
    <property type="entry name" value="Ribosomal_uS13_CS"/>
</dbReference>
<dbReference type="NCBIfam" id="TIGR03631">
    <property type="entry name" value="uS13_bact"/>
    <property type="match status" value="1"/>
</dbReference>
<dbReference type="PANTHER" id="PTHR10871">
    <property type="entry name" value="30S RIBOSOMAL PROTEIN S13/40S RIBOSOMAL PROTEIN S18"/>
    <property type="match status" value="1"/>
</dbReference>
<dbReference type="PANTHER" id="PTHR10871:SF1">
    <property type="entry name" value="SMALL RIBOSOMAL SUBUNIT PROTEIN US13M"/>
    <property type="match status" value="1"/>
</dbReference>
<dbReference type="Pfam" id="PF00416">
    <property type="entry name" value="Ribosomal_S13"/>
    <property type="match status" value="1"/>
</dbReference>
<dbReference type="PIRSF" id="PIRSF002134">
    <property type="entry name" value="Ribosomal_S13"/>
    <property type="match status" value="1"/>
</dbReference>
<dbReference type="SUPFAM" id="SSF46946">
    <property type="entry name" value="S13-like H2TH domain"/>
    <property type="match status" value="1"/>
</dbReference>
<dbReference type="PROSITE" id="PS00646">
    <property type="entry name" value="RIBOSOMAL_S13_1"/>
    <property type="match status" value="1"/>
</dbReference>
<dbReference type="PROSITE" id="PS50159">
    <property type="entry name" value="RIBOSOMAL_S13_2"/>
    <property type="match status" value="1"/>
</dbReference>
<reference key="1">
    <citation type="journal article" date="2009" name="PLoS ONE">
        <title>Complete genome sequence of Francisella tularensis subspecies holarctica FTNF002-00.</title>
        <authorList>
            <person name="Barabote R.D."/>
            <person name="Xie G."/>
            <person name="Brettin T.S."/>
            <person name="Hinrichs S.H."/>
            <person name="Fey P.D."/>
            <person name="Jay J.J."/>
            <person name="Engle J.L."/>
            <person name="Godbole S.D."/>
            <person name="Noronha J.M."/>
            <person name="Scheuermann R.H."/>
            <person name="Zhou L.W."/>
            <person name="Lion C."/>
            <person name="Dempsey M.P."/>
        </authorList>
    </citation>
    <scope>NUCLEOTIDE SEQUENCE [LARGE SCALE GENOMIC DNA]</scope>
    <source>
        <strain>FTNF002-00 / FTA</strain>
    </source>
</reference>
<feature type="chain" id="PRO_1000051880" description="Small ribosomal subunit protein uS13">
    <location>
        <begin position="1"/>
        <end position="118"/>
    </location>
</feature>
<feature type="region of interest" description="Disordered" evidence="2">
    <location>
        <begin position="91"/>
        <end position="118"/>
    </location>
</feature>
<proteinExistence type="inferred from homology"/>
<keyword id="KW-0687">Ribonucleoprotein</keyword>
<keyword id="KW-0689">Ribosomal protein</keyword>
<keyword id="KW-0694">RNA-binding</keyword>
<keyword id="KW-0699">rRNA-binding</keyword>
<keyword id="KW-0820">tRNA-binding</keyword>
<gene>
    <name evidence="1" type="primary">rpsM</name>
    <name type="ordered locus">FTA_0272</name>
</gene>